<keyword id="KW-0067">ATP-binding</keyword>
<keyword id="KW-0143">Chaperone</keyword>
<keyword id="KW-0963">Cytoplasm</keyword>
<keyword id="KW-0413">Isomerase</keyword>
<keyword id="KW-0547">Nucleotide-binding</keyword>
<reference key="1">
    <citation type="submission" date="2007-04" db="EMBL/GenBank/DDBJ databases">
        <title>Complete sequence of Pseudomonas mendocina ymp.</title>
        <authorList>
            <consortium name="US DOE Joint Genome Institute"/>
            <person name="Copeland A."/>
            <person name="Lucas S."/>
            <person name="Lapidus A."/>
            <person name="Barry K."/>
            <person name="Glavina del Rio T."/>
            <person name="Dalin E."/>
            <person name="Tice H."/>
            <person name="Pitluck S."/>
            <person name="Kiss H."/>
            <person name="Brettin T."/>
            <person name="Detter J.C."/>
            <person name="Bruce D."/>
            <person name="Han C."/>
            <person name="Schmutz J."/>
            <person name="Larimer F."/>
            <person name="Land M."/>
            <person name="Hauser L."/>
            <person name="Kyrpides N."/>
            <person name="Mikhailova N."/>
            <person name="Hersman L."/>
            <person name="Dubois J."/>
            <person name="Maurice P."/>
            <person name="Richardson P."/>
        </authorList>
    </citation>
    <scope>NUCLEOTIDE SEQUENCE [LARGE SCALE GENOMIC DNA]</scope>
    <source>
        <strain>ymp</strain>
    </source>
</reference>
<accession>A4XYM0</accession>
<proteinExistence type="inferred from homology"/>
<sequence>MAAKEVKFGDSARKKMLVGVNVLADAVKATLGPKGRNVVLAKSFGAPTITKDGVSVAKEIELKDAFENMGAQLVKDVASKANDAAGDGTTTATVLAQAIVNEGLKSVAAGMNPMDLKRGIDKATSAIVAQLKDLAKPCADSKAIAQVGTISANSDNSIGDIIAEAMDKVGKEGVITVEEGSGLENELSVVEGMQFDRGYLSPYFINKPDTMVAELEGPLLLLVDKKISNIRELLPVLEAVAKAGRPLLIVAEDVEGEALATLVVNNMRGIVKVAAVKAPGFGDRRKAMLQDIAILTGGTVISEEVGLSLESATLEHLGNAKRVVLNKDNTTIIDGAGAQADIEARVAQIRKQVEETSSDYDKEKLQERLAKLAGGVAVIKVGAATEVEMKEKKARVEDALHATRAAVEEGVVPGGGVALVRALQAIEGLKGDNEDQNVGIALLRRAVEAPLRQIVANAGGEPSVVVDKVKQGSGNFGFNAATDTYGDMIEMGILDPAKVTRSALQAAASIGGLMITTEAMVAEAADDKAPAMPDMGGMGGMGGMGGMM</sequence>
<gene>
    <name evidence="1" type="primary">groEL</name>
    <name evidence="1" type="synonym">groL</name>
    <name type="ordered locus">Pmen_3688</name>
</gene>
<protein>
    <recommendedName>
        <fullName evidence="1">Chaperonin GroEL</fullName>
        <ecNumber evidence="1">5.6.1.7</ecNumber>
    </recommendedName>
    <alternativeName>
        <fullName evidence="1">60 kDa chaperonin</fullName>
    </alternativeName>
    <alternativeName>
        <fullName evidence="1">Chaperonin-60</fullName>
        <shortName evidence="1">Cpn60</shortName>
    </alternativeName>
</protein>
<evidence type="ECO:0000255" key="1">
    <source>
        <dbReference type="HAMAP-Rule" id="MF_00600"/>
    </source>
</evidence>
<dbReference type="EC" id="5.6.1.7" evidence="1"/>
<dbReference type="EMBL" id="CP000680">
    <property type="protein sequence ID" value="ABP86436.1"/>
    <property type="molecule type" value="Genomic_DNA"/>
</dbReference>
<dbReference type="SMR" id="A4XYM0"/>
<dbReference type="STRING" id="399739.Pmen_3688"/>
<dbReference type="KEGG" id="pmy:Pmen_3688"/>
<dbReference type="PATRIC" id="fig|399739.8.peg.3740"/>
<dbReference type="eggNOG" id="COG0459">
    <property type="taxonomic scope" value="Bacteria"/>
</dbReference>
<dbReference type="HOGENOM" id="CLU_016503_3_0_6"/>
<dbReference type="OrthoDB" id="9766614at2"/>
<dbReference type="GO" id="GO:0005737">
    <property type="term" value="C:cytoplasm"/>
    <property type="evidence" value="ECO:0007669"/>
    <property type="project" value="UniProtKB-SubCell"/>
</dbReference>
<dbReference type="GO" id="GO:0005524">
    <property type="term" value="F:ATP binding"/>
    <property type="evidence" value="ECO:0007669"/>
    <property type="project" value="UniProtKB-UniRule"/>
</dbReference>
<dbReference type="GO" id="GO:0140662">
    <property type="term" value="F:ATP-dependent protein folding chaperone"/>
    <property type="evidence" value="ECO:0007669"/>
    <property type="project" value="InterPro"/>
</dbReference>
<dbReference type="GO" id="GO:0016853">
    <property type="term" value="F:isomerase activity"/>
    <property type="evidence" value="ECO:0007669"/>
    <property type="project" value="UniProtKB-KW"/>
</dbReference>
<dbReference type="GO" id="GO:0051082">
    <property type="term" value="F:unfolded protein binding"/>
    <property type="evidence" value="ECO:0007669"/>
    <property type="project" value="UniProtKB-UniRule"/>
</dbReference>
<dbReference type="GO" id="GO:0042026">
    <property type="term" value="P:protein refolding"/>
    <property type="evidence" value="ECO:0007669"/>
    <property type="project" value="UniProtKB-UniRule"/>
</dbReference>
<dbReference type="CDD" id="cd03344">
    <property type="entry name" value="GroEL"/>
    <property type="match status" value="1"/>
</dbReference>
<dbReference type="FunFam" id="1.10.560.10:FF:000001">
    <property type="entry name" value="60 kDa chaperonin"/>
    <property type="match status" value="1"/>
</dbReference>
<dbReference type="FunFam" id="3.50.7.10:FF:000001">
    <property type="entry name" value="60 kDa chaperonin"/>
    <property type="match status" value="1"/>
</dbReference>
<dbReference type="Gene3D" id="3.50.7.10">
    <property type="entry name" value="GroEL"/>
    <property type="match status" value="1"/>
</dbReference>
<dbReference type="Gene3D" id="1.10.560.10">
    <property type="entry name" value="GroEL-like equatorial domain"/>
    <property type="match status" value="1"/>
</dbReference>
<dbReference type="Gene3D" id="3.30.260.10">
    <property type="entry name" value="TCP-1-like chaperonin intermediate domain"/>
    <property type="match status" value="1"/>
</dbReference>
<dbReference type="HAMAP" id="MF_00600">
    <property type="entry name" value="CH60"/>
    <property type="match status" value="1"/>
</dbReference>
<dbReference type="InterPro" id="IPR018370">
    <property type="entry name" value="Chaperonin_Cpn60_CS"/>
</dbReference>
<dbReference type="InterPro" id="IPR001844">
    <property type="entry name" value="Cpn60/GroEL"/>
</dbReference>
<dbReference type="InterPro" id="IPR002423">
    <property type="entry name" value="Cpn60/GroEL/TCP-1"/>
</dbReference>
<dbReference type="InterPro" id="IPR027409">
    <property type="entry name" value="GroEL-like_apical_dom_sf"/>
</dbReference>
<dbReference type="InterPro" id="IPR027413">
    <property type="entry name" value="GROEL-like_equatorial_sf"/>
</dbReference>
<dbReference type="InterPro" id="IPR027410">
    <property type="entry name" value="TCP-1-like_intermed_sf"/>
</dbReference>
<dbReference type="NCBIfam" id="TIGR02348">
    <property type="entry name" value="GroEL"/>
    <property type="match status" value="1"/>
</dbReference>
<dbReference type="NCBIfam" id="NF000592">
    <property type="entry name" value="PRK00013.1"/>
    <property type="match status" value="1"/>
</dbReference>
<dbReference type="NCBIfam" id="NF009487">
    <property type="entry name" value="PRK12849.1"/>
    <property type="match status" value="1"/>
</dbReference>
<dbReference type="NCBIfam" id="NF009488">
    <property type="entry name" value="PRK12850.1"/>
    <property type="match status" value="1"/>
</dbReference>
<dbReference type="NCBIfam" id="NF009489">
    <property type="entry name" value="PRK12851.1"/>
    <property type="match status" value="1"/>
</dbReference>
<dbReference type="PANTHER" id="PTHR45633">
    <property type="entry name" value="60 KDA HEAT SHOCK PROTEIN, MITOCHONDRIAL"/>
    <property type="match status" value="1"/>
</dbReference>
<dbReference type="Pfam" id="PF00118">
    <property type="entry name" value="Cpn60_TCP1"/>
    <property type="match status" value="1"/>
</dbReference>
<dbReference type="PRINTS" id="PR00298">
    <property type="entry name" value="CHAPERONIN60"/>
</dbReference>
<dbReference type="SUPFAM" id="SSF52029">
    <property type="entry name" value="GroEL apical domain-like"/>
    <property type="match status" value="1"/>
</dbReference>
<dbReference type="SUPFAM" id="SSF48592">
    <property type="entry name" value="GroEL equatorial domain-like"/>
    <property type="match status" value="1"/>
</dbReference>
<dbReference type="SUPFAM" id="SSF54849">
    <property type="entry name" value="GroEL-intermediate domain like"/>
    <property type="match status" value="1"/>
</dbReference>
<dbReference type="PROSITE" id="PS00296">
    <property type="entry name" value="CHAPERONINS_CPN60"/>
    <property type="match status" value="1"/>
</dbReference>
<feature type="chain" id="PRO_1000025821" description="Chaperonin GroEL">
    <location>
        <begin position="1"/>
        <end position="548"/>
    </location>
</feature>
<feature type="binding site" evidence="1">
    <location>
        <begin position="30"/>
        <end position="33"/>
    </location>
    <ligand>
        <name>ATP</name>
        <dbReference type="ChEBI" id="CHEBI:30616"/>
    </ligand>
</feature>
<feature type="binding site" evidence="1">
    <location>
        <position position="51"/>
    </location>
    <ligand>
        <name>ATP</name>
        <dbReference type="ChEBI" id="CHEBI:30616"/>
    </ligand>
</feature>
<feature type="binding site" evidence="1">
    <location>
        <begin position="87"/>
        <end position="91"/>
    </location>
    <ligand>
        <name>ATP</name>
        <dbReference type="ChEBI" id="CHEBI:30616"/>
    </ligand>
</feature>
<feature type="binding site" evidence="1">
    <location>
        <position position="415"/>
    </location>
    <ligand>
        <name>ATP</name>
        <dbReference type="ChEBI" id="CHEBI:30616"/>
    </ligand>
</feature>
<feature type="binding site" evidence="1">
    <location>
        <begin position="479"/>
        <end position="481"/>
    </location>
    <ligand>
        <name>ATP</name>
        <dbReference type="ChEBI" id="CHEBI:30616"/>
    </ligand>
</feature>
<feature type="binding site" evidence="1">
    <location>
        <position position="495"/>
    </location>
    <ligand>
        <name>ATP</name>
        <dbReference type="ChEBI" id="CHEBI:30616"/>
    </ligand>
</feature>
<name>CH60_ECTM1</name>
<organism>
    <name type="scientific">Ectopseudomonas mendocina (strain ymp)</name>
    <name type="common">Pseudomonas mendocina</name>
    <dbReference type="NCBI Taxonomy" id="399739"/>
    <lineage>
        <taxon>Bacteria</taxon>
        <taxon>Pseudomonadati</taxon>
        <taxon>Pseudomonadota</taxon>
        <taxon>Gammaproteobacteria</taxon>
        <taxon>Pseudomonadales</taxon>
        <taxon>Pseudomonadaceae</taxon>
        <taxon>Ectopseudomonas</taxon>
    </lineage>
</organism>
<comment type="function">
    <text evidence="1">Together with its co-chaperonin GroES, plays an essential role in assisting protein folding. The GroEL-GroES system forms a nano-cage that allows encapsulation of the non-native substrate proteins and provides a physical environment optimized to promote and accelerate protein folding.</text>
</comment>
<comment type="catalytic activity">
    <reaction evidence="1">
        <text>ATP + H2O + a folded polypeptide = ADP + phosphate + an unfolded polypeptide.</text>
        <dbReference type="EC" id="5.6.1.7"/>
    </reaction>
</comment>
<comment type="subunit">
    <text evidence="1">Forms a cylinder of 14 subunits composed of two heptameric rings stacked back-to-back. Interacts with the co-chaperonin GroES.</text>
</comment>
<comment type="subcellular location">
    <subcellularLocation>
        <location evidence="1">Cytoplasm</location>
    </subcellularLocation>
</comment>
<comment type="similarity">
    <text evidence="1">Belongs to the chaperonin (HSP60) family.</text>
</comment>